<feature type="chain" id="PRO_0000230894" description="Transcriptional repressor NrdR">
    <location>
        <begin position="1"/>
        <end position="156"/>
    </location>
</feature>
<feature type="domain" description="ATP-cone" evidence="1">
    <location>
        <begin position="49"/>
        <end position="139"/>
    </location>
</feature>
<feature type="zinc finger region" evidence="1">
    <location>
        <begin position="3"/>
        <end position="34"/>
    </location>
</feature>
<protein>
    <recommendedName>
        <fullName evidence="1">Transcriptional repressor NrdR</fullName>
    </recommendedName>
</protein>
<keyword id="KW-0067">ATP-binding</keyword>
<keyword id="KW-0238">DNA-binding</keyword>
<keyword id="KW-0479">Metal-binding</keyword>
<keyword id="KW-0547">Nucleotide-binding</keyword>
<keyword id="KW-1185">Reference proteome</keyword>
<keyword id="KW-0678">Repressor</keyword>
<keyword id="KW-0804">Transcription</keyword>
<keyword id="KW-0805">Transcription regulation</keyword>
<keyword id="KW-0862">Zinc</keyword>
<keyword id="KW-0863">Zinc-finger</keyword>
<name>NRDR_RUEPO</name>
<accession>Q5LSL4</accession>
<evidence type="ECO:0000255" key="1">
    <source>
        <dbReference type="HAMAP-Rule" id="MF_00440"/>
    </source>
</evidence>
<dbReference type="EMBL" id="CP000031">
    <property type="protein sequence ID" value="AAV95033.1"/>
    <property type="molecule type" value="Genomic_DNA"/>
</dbReference>
<dbReference type="RefSeq" id="WP_011047487.1">
    <property type="nucleotide sequence ID" value="NC_003911.12"/>
</dbReference>
<dbReference type="SMR" id="Q5LSL4"/>
<dbReference type="STRING" id="246200.SPO1753"/>
<dbReference type="PaxDb" id="246200-SPO1753"/>
<dbReference type="KEGG" id="sil:SPO1753"/>
<dbReference type="eggNOG" id="COG1327">
    <property type="taxonomic scope" value="Bacteria"/>
</dbReference>
<dbReference type="HOGENOM" id="CLU_108412_0_1_5"/>
<dbReference type="OrthoDB" id="9807461at2"/>
<dbReference type="Proteomes" id="UP000001023">
    <property type="component" value="Chromosome"/>
</dbReference>
<dbReference type="GO" id="GO:0005524">
    <property type="term" value="F:ATP binding"/>
    <property type="evidence" value="ECO:0007669"/>
    <property type="project" value="UniProtKB-KW"/>
</dbReference>
<dbReference type="GO" id="GO:0003677">
    <property type="term" value="F:DNA binding"/>
    <property type="evidence" value="ECO:0007669"/>
    <property type="project" value="UniProtKB-KW"/>
</dbReference>
<dbReference type="GO" id="GO:0008270">
    <property type="term" value="F:zinc ion binding"/>
    <property type="evidence" value="ECO:0007669"/>
    <property type="project" value="UniProtKB-UniRule"/>
</dbReference>
<dbReference type="GO" id="GO:0045892">
    <property type="term" value="P:negative regulation of DNA-templated transcription"/>
    <property type="evidence" value="ECO:0007669"/>
    <property type="project" value="UniProtKB-UniRule"/>
</dbReference>
<dbReference type="HAMAP" id="MF_00440">
    <property type="entry name" value="NrdR"/>
    <property type="match status" value="1"/>
</dbReference>
<dbReference type="InterPro" id="IPR005144">
    <property type="entry name" value="ATP-cone_dom"/>
</dbReference>
<dbReference type="InterPro" id="IPR055173">
    <property type="entry name" value="NrdR-like_N"/>
</dbReference>
<dbReference type="InterPro" id="IPR003796">
    <property type="entry name" value="RNR_NrdR-like"/>
</dbReference>
<dbReference type="NCBIfam" id="TIGR00244">
    <property type="entry name" value="transcriptional regulator NrdR"/>
    <property type="match status" value="1"/>
</dbReference>
<dbReference type="PANTHER" id="PTHR30455">
    <property type="entry name" value="TRANSCRIPTIONAL REPRESSOR NRDR"/>
    <property type="match status" value="1"/>
</dbReference>
<dbReference type="PANTHER" id="PTHR30455:SF2">
    <property type="entry name" value="TRANSCRIPTIONAL REPRESSOR NRDR"/>
    <property type="match status" value="1"/>
</dbReference>
<dbReference type="Pfam" id="PF03477">
    <property type="entry name" value="ATP-cone"/>
    <property type="match status" value="1"/>
</dbReference>
<dbReference type="Pfam" id="PF22811">
    <property type="entry name" value="Zn_ribbon_NrdR"/>
    <property type="match status" value="1"/>
</dbReference>
<dbReference type="PROSITE" id="PS51161">
    <property type="entry name" value="ATP_CONE"/>
    <property type="match status" value="1"/>
</dbReference>
<organism>
    <name type="scientific">Ruegeria pomeroyi (strain ATCC 700808 / DSM 15171 / DSS-3)</name>
    <name type="common">Silicibacter pomeroyi</name>
    <dbReference type="NCBI Taxonomy" id="246200"/>
    <lineage>
        <taxon>Bacteria</taxon>
        <taxon>Pseudomonadati</taxon>
        <taxon>Pseudomonadota</taxon>
        <taxon>Alphaproteobacteria</taxon>
        <taxon>Rhodobacterales</taxon>
        <taxon>Roseobacteraceae</taxon>
        <taxon>Ruegeria</taxon>
    </lineage>
</organism>
<proteinExistence type="inferred from homology"/>
<gene>
    <name evidence="1" type="primary">nrdR</name>
    <name type="ordered locus">SPO1753</name>
</gene>
<comment type="function">
    <text evidence="1">Negatively regulates transcription of bacterial ribonucleotide reductase nrd genes and operons by binding to NrdR-boxes.</text>
</comment>
<comment type="cofactor">
    <cofactor evidence="1">
        <name>Zn(2+)</name>
        <dbReference type="ChEBI" id="CHEBI:29105"/>
    </cofactor>
    <text evidence="1">Binds 1 zinc ion.</text>
</comment>
<comment type="similarity">
    <text evidence="1">Belongs to the NrdR family.</text>
</comment>
<sequence>MRCPFCGNIDTQVKDSRPAEDHVSIRRRRFCPACGGRFTTYERVQLRDLVVIKTSGKREDFDRDKLERSIRISMQKRPIDPERIDQMISGIVRRLESMGETDIPSKKIGEIVMEALARIDTVAYVRFASVYKNFQAADDFEDFVHELRPPSPPTEE</sequence>
<reference key="1">
    <citation type="journal article" date="2004" name="Nature">
        <title>Genome sequence of Silicibacter pomeroyi reveals adaptations to the marine environment.</title>
        <authorList>
            <person name="Moran M.A."/>
            <person name="Buchan A."/>
            <person name="Gonzalez J.M."/>
            <person name="Heidelberg J.F."/>
            <person name="Whitman W.B."/>
            <person name="Kiene R.P."/>
            <person name="Henriksen J.R."/>
            <person name="King G.M."/>
            <person name="Belas R."/>
            <person name="Fuqua C."/>
            <person name="Brinkac L.M."/>
            <person name="Lewis M."/>
            <person name="Johri S."/>
            <person name="Weaver B."/>
            <person name="Pai G."/>
            <person name="Eisen J.A."/>
            <person name="Rahe E."/>
            <person name="Sheldon W.M."/>
            <person name="Ye W."/>
            <person name="Miller T.R."/>
            <person name="Carlton J."/>
            <person name="Rasko D.A."/>
            <person name="Paulsen I.T."/>
            <person name="Ren Q."/>
            <person name="Daugherty S.C."/>
            <person name="DeBoy R.T."/>
            <person name="Dodson R.J."/>
            <person name="Durkin A.S."/>
            <person name="Madupu R."/>
            <person name="Nelson W.C."/>
            <person name="Sullivan S.A."/>
            <person name="Rosovitz M.J."/>
            <person name="Haft D.H."/>
            <person name="Selengut J."/>
            <person name="Ward N."/>
        </authorList>
    </citation>
    <scope>NUCLEOTIDE SEQUENCE [LARGE SCALE GENOMIC DNA]</scope>
    <source>
        <strain>ATCC 700808 / DSM 15171 / DSS-3</strain>
    </source>
</reference>
<reference key="2">
    <citation type="journal article" date="2014" name="Stand. Genomic Sci.">
        <title>An updated genome annotation for the model marine bacterium Ruegeria pomeroyi DSS-3.</title>
        <authorList>
            <person name="Rivers A.R."/>
            <person name="Smith C.B."/>
            <person name="Moran M.A."/>
        </authorList>
    </citation>
    <scope>GENOME REANNOTATION</scope>
    <source>
        <strain>ATCC 700808 / DSM 15171 / DSS-3</strain>
    </source>
</reference>